<reference key="1">
    <citation type="journal article" date="2008" name="Comp. Biochem. Physiol.">
        <title>Molecular cloning and characterization of the chicken cationic amino acid transporter-2 gene.</title>
        <authorList>
            <person name="Humphrey B.D."/>
            <person name="Kirsch S."/>
            <person name="Morris D."/>
        </authorList>
    </citation>
    <scope>NUCLEOTIDE SEQUENCE [MRNA] (ISOFORMS 1; 2 AND 3)</scope>
    <scope>IDENTIFICATION OF ISOFORM 3 AS POTENTIAL NMD TARGET</scope>
    <scope>TISSUE SPECIFICITY</scope>
    <source>
        <tissue>Pectoralis muscle</tissue>
    </source>
</reference>
<gene>
    <name type="primary">SLC7A2</name>
    <name type="synonym">ATRC2</name>
    <name type="synonym">CAT2</name>
</gene>
<feature type="chain" id="PRO_0000375228" description="Cationic amino acid transporter 2">
    <location>
        <begin position="1"/>
        <end position="654"/>
    </location>
</feature>
<feature type="topological domain" description="Cytoplasmic" evidence="3">
    <location>
        <begin position="1"/>
        <end position="37"/>
    </location>
</feature>
<feature type="transmembrane region" description="Helical" evidence="3">
    <location>
        <begin position="38"/>
        <end position="58"/>
    </location>
</feature>
<feature type="topological domain" description="Extracellular" evidence="3">
    <location>
        <begin position="59"/>
        <end position="65"/>
    </location>
</feature>
<feature type="transmembrane region" description="Helical" evidence="3">
    <location>
        <begin position="66"/>
        <end position="86"/>
    </location>
</feature>
<feature type="topological domain" description="Cytoplasmic" evidence="3">
    <location>
        <begin position="87"/>
        <end position="103"/>
    </location>
</feature>
<feature type="transmembrane region" description="Helical" evidence="3">
    <location>
        <begin position="104"/>
        <end position="124"/>
    </location>
</feature>
<feature type="topological domain" description="Extracellular" evidence="3">
    <location>
        <begin position="125"/>
        <end position="162"/>
    </location>
</feature>
<feature type="transmembrane region" description="Helical" evidence="3">
    <location>
        <begin position="163"/>
        <end position="183"/>
    </location>
</feature>
<feature type="topological domain" description="Cytoplasmic" evidence="3">
    <location>
        <begin position="184"/>
        <end position="191"/>
    </location>
</feature>
<feature type="transmembrane region" description="Helical" evidence="3">
    <location>
        <begin position="192"/>
        <end position="212"/>
    </location>
</feature>
<feature type="topological domain" description="Extracellular" evidence="3">
    <location>
        <begin position="213"/>
        <end position="248"/>
    </location>
</feature>
<feature type="transmembrane region" description="Helical" evidence="3">
    <location>
        <begin position="249"/>
        <end position="269"/>
    </location>
</feature>
<feature type="topological domain" description="Cytoplasmic" evidence="3">
    <location>
        <begin position="270"/>
        <end position="289"/>
    </location>
</feature>
<feature type="transmembrane region" description="Helical" evidence="3">
    <location>
        <begin position="290"/>
        <end position="310"/>
    </location>
</feature>
<feature type="topological domain" description="Extracellular" evidence="3">
    <location>
        <begin position="311"/>
        <end position="339"/>
    </location>
</feature>
<feature type="transmembrane region" description="Helical" evidence="3">
    <location>
        <begin position="340"/>
        <end position="360"/>
    </location>
</feature>
<feature type="topological domain" description="Cytoplasmic" evidence="3">
    <location>
        <begin position="361"/>
        <end position="385"/>
    </location>
</feature>
<feature type="transmembrane region" description="Helical" evidence="3">
    <location>
        <begin position="386"/>
        <end position="406"/>
    </location>
</feature>
<feature type="topological domain" description="Extracellular" evidence="3">
    <location>
        <begin position="407"/>
        <end position="409"/>
    </location>
</feature>
<feature type="transmembrane region" description="Helical" evidence="3">
    <location>
        <begin position="410"/>
        <end position="430"/>
    </location>
</feature>
<feature type="topological domain" description="Cytoplasmic" evidence="3">
    <location>
        <begin position="431"/>
        <end position="489"/>
    </location>
</feature>
<feature type="transmembrane region" description="Helical" evidence="3">
    <location>
        <begin position="490"/>
        <end position="510"/>
    </location>
</feature>
<feature type="topological domain" description="Extracellular" evidence="3">
    <location>
        <begin position="511"/>
        <end position="522"/>
    </location>
</feature>
<feature type="transmembrane region" description="Helical" evidence="3">
    <location>
        <begin position="523"/>
        <end position="543"/>
    </location>
</feature>
<feature type="topological domain" description="Cytoplasmic" evidence="3">
    <location>
        <begin position="544"/>
        <end position="554"/>
    </location>
</feature>
<feature type="transmembrane region" description="Helical" evidence="3">
    <location>
        <begin position="555"/>
        <end position="575"/>
    </location>
</feature>
<feature type="topological domain" description="Extracellular" evidence="3">
    <location>
        <begin position="576"/>
        <end position="581"/>
    </location>
</feature>
<feature type="transmembrane region" description="Helical" evidence="3">
    <location>
        <begin position="582"/>
        <end position="602"/>
    </location>
</feature>
<feature type="topological domain" description="Cytoplasmic" evidence="3">
    <location>
        <begin position="603"/>
        <end position="654"/>
    </location>
</feature>
<feature type="region of interest" description="Disordered" evidence="4">
    <location>
        <begin position="611"/>
        <end position="654"/>
    </location>
</feature>
<feature type="compositionally biased region" description="Acidic residues" evidence="4">
    <location>
        <begin position="631"/>
        <end position="640"/>
    </location>
</feature>
<feature type="compositionally biased region" description="Basic and acidic residues" evidence="4">
    <location>
        <begin position="641"/>
        <end position="654"/>
    </location>
</feature>
<feature type="glycosylation site" description="N-linked (GlcNAc...) asparagine" evidence="3">
    <location>
        <position position="226"/>
    </location>
</feature>
<feature type="glycosylation site" description="N-linked (GlcNAc...) asparagine" evidence="3">
    <location>
        <position position="233"/>
    </location>
</feature>
<feature type="glycosylation site" description="N-linked (GlcNAc...) asparagine" evidence="3">
    <location>
        <position position="239"/>
    </location>
</feature>
<feature type="splice variant" id="VSP_037356" description="In isoform 3." evidence="6">
    <original>LLGSMF</original>
    <variation>YYGISV</variation>
    <location>
        <begin position="353"/>
        <end position="358"/>
    </location>
</feature>
<feature type="splice variant" id="VSP_037357" description="In isoform 2." evidence="6">
    <original>MFPLPRIVFAMARDGLLFSFLAKVSKRQAPLLATLTAGVIS</original>
    <variation>IFPMPRVIYAMAKDGLLFKCLAQINSKTKTPLVATPSSGAVA</variation>
    <location>
        <begin position="357"/>
        <end position="397"/>
    </location>
</feature>
<feature type="splice variant" id="VSP_037358" description="In isoform 3." evidence="6">
    <location>
        <begin position="359"/>
        <end position="654"/>
    </location>
</feature>
<proteinExistence type="evidence at transcript level"/>
<protein>
    <recommendedName>
        <fullName>Cationic amino acid transporter 2</fullName>
        <shortName>CAT-2</shortName>
        <shortName>CAT2</shortName>
        <shortName>cCAT-2</shortName>
    </recommendedName>
    <alternativeName>
        <fullName>Low affinity cationic amino acid transporter 2</fullName>
    </alternativeName>
    <alternativeName>
        <fullName>Solute carrier family 7 member 2</fullName>
    </alternativeName>
</protein>
<dbReference type="EMBL" id="EU360448">
    <property type="protein sequence ID" value="ACA61195.1"/>
    <property type="molecule type" value="mRNA"/>
</dbReference>
<dbReference type="EMBL" id="EU360449">
    <property type="protein sequence ID" value="ACA61196.1"/>
    <property type="molecule type" value="mRNA"/>
</dbReference>
<dbReference type="EMBL" id="EU360450">
    <property type="protein sequence ID" value="ACA61197.1"/>
    <property type="molecule type" value="mRNA"/>
</dbReference>
<dbReference type="SMR" id="B3TP03"/>
<dbReference type="FunCoup" id="B3TP03">
    <property type="interactions" value="224"/>
</dbReference>
<dbReference type="STRING" id="9031.ENSGALP00000041429"/>
<dbReference type="GlyCosmos" id="B3TP03">
    <property type="glycosylation" value="3 sites, No reported glycans"/>
</dbReference>
<dbReference type="GlyGen" id="B3TP03">
    <property type="glycosylation" value="3 sites"/>
</dbReference>
<dbReference type="PaxDb" id="9031-ENSGALP00000041429"/>
<dbReference type="VEuPathDB" id="HostDB:geneid_422730"/>
<dbReference type="eggNOG" id="KOG1286">
    <property type="taxonomic scope" value="Eukaryota"/>
</dbReference>
<dbReference type="InParanoid" id="B3TP03"/>
<dbReference type="OrthoDB" id="3900342at2759"/>
<dbReference type="PhylomeDB" id="B3TP03"/>
<dbReference type="SABIO-RK" id="B3TP03"/>
<dbReference type="Proteomes" id="UP000000539">
    <property type="component" value="Unassembled WGS sequence"/>
</dbReference>
<dbReference type="GO" id="GO:0005737">
    <property type="term" value="C:cytoplasm"/>
    <property type="evidence" value="ECO:0000314"/>
    <property type="project" value="AgBase"/>
</dbReference>
<dbReference type="GO" id="GO:0031410">
    <property type="term" value="C:cytoplasmic vesicle"/>
    <property type="evidence" value="ECO:0000314"/>
    <property type="project" value="AgBase"/>
</dbReference>
<dbReference type="GO" id="GO:0005794">
    <property type="term" value="C:Golgi apparatus"/>
    <property type="evidence" value="ECO:0000314"/>
    <property type="project" value="AgBase"/>
</dbReference>
<dbReference type="GO" id="GO:0005886">
    <property type="term" value="C:plasma membrane"/>
    <property type="evidence" value="ECO:0000314"/>
    <property type="project" value="AgBase"/>
</dbReference>
<dbReference type="GO" id="GO:0061459">
    <property type="term" value="F:L-arginine transmembrane transporter activity"/>
    <property type="evidence" value="ECO:0000314"/>
    <property type="project" value="AgBase"/>
</dbReference>
<dbReference type="GO" id="GO:0015189">
    <property type="term" value="F:L-lysine transmembrane transporter activity"/>
    <property type="evidence" value="ECO:0000314"/>
    <property type="project" value="AgBase"/>
</dbReference>
<dbReference type="GO" id="GO:0000064">
    <property type="term" value="F:L-ornithine transmembrane transporter activity"/>
    <property type="evidence" value="ECO:0000318"/>
    <property type="project" value="GO_Central"/>
</dbReference>
<dbReference type="GO" id="GO:0097638">
    <property type="term" value="P:L-arginine import across plasma membrane"/>
    <property type="evidence" value="ECO:0000314"/>
    <property type="project" value="AgBase"/>
</dbReference>
<dbReference type="GO" id="GO:0097639">
    <property type="term" value="P:L-lysine import across plasma membrane"/>
    <property type="evidence" value="ECO:0000314"/>
    <property type="project" value="AgBase"/>
</dbReference>
<dbReference type="GO" id="GO:1903352">
    <property type="term" value="P:L-ornithine transmembrane transport"/>
    <property type="evidence" value="ECO:0000318"/>
    <property type="project" value="GO_Central"/>
</dbReference>
<dbReference type="FunFam" id="1.20.1740.10:FF:000034">
    <property type="entry name" value="cationic amino acid transporter 2 isoform X2"/>
    <property type="match status" value="1"/>
</dbReference>
<dbReference type="FunFam" id="1.20.1740.10:FF:000009">
    <property type="entry name" value="Low affinity cationic amino acid transporter 2"/>
    <property type="match status" value="1"/>
</dbReference>
<dbReference type="Gene3D" id="1.20.1740.10">
    <property type="entry name" value="Amino acid/polyamine transporter I"/>
    <property type="match status" value="2"/>
</dbReference>
<dbReference type="InterPro" id="IPR002293">
    <property type="entry name" value="AA/rel_permease1"/>
</dbReference>
<dbReference type="InterPro" id="IPR004755">
    <property type="entry name" value="Cat_AA_permease"/>
</dbReference>
<dbReference type="InterPro" id="IPR029485">
    <property type="entry name" value="CAT_C"/>
</dbReference>
<dbReference type="NCBIfam" id="TIGR00906">
    <property type="entry name" value="2A0303"/>
    <property type="match status" value="1"/>
</dbReference>
<dbReference type="PANTHER" id="PTHR43243:SF35">
    <property type="entry name" value="CATIONIC AMINO ACID TRANSPORTER 2"/>
    <property type="match status" value="1"/>
</dbReference>
<dbReference type="PANTHER" id="PTHR43243">
    <property type="entry name" value="INNER MEMBRANE TRANSPORTER YGJI-RELATED"/>
    <property type="match status" value="1"/>
</dbReference>
<dbReference type="Pfam" id="PF13520">
    <property type="entry name" value="AA_permease_2"/>
    <property type="match status" value="1"/>
</dbReference>
<dbReference type="Pfam" id="PF13906">
    <property type="entry name" value="AA_permease_C"/>
    <property type="match status" value="1"/>
</dbReference>
<name>CTR2_CHICK</name>
<keyword id="KW-0025">Alternative splicing</keyword>
<keyword id="KW-0029">Amino-acid transport</keyword>
<keyword id="KW-1003">Cell membrane</keyword>
<keyword id="KW-0325">Glycoprotein</keyword>
<keyword id="KW-0472">Membrane</keyword>
<keyword id="KW-1185">Reference proteome</keyword>
<keyword id="KW-0812">Transmembrane</keyword>
<keyword id="KW-1133">Transmembrane helix</keyword>
<keyword id="KW-0813">Transport</keyword>
<sequence>MLPCGPALTFVRCLVRKKNIKGEGLEDSLCRCLSTLDLIALGVGSTLGAGVYVLAGEVAKSDSGPSIVVSFLIAALASVMAGLCYAEFGARVPKTGSAYLYTYVAVGELWAFITGWNLILSYVIGTSSVARAWSGTFDELLGKQISHFFKTYFKMNYPGLAEYPDFFAVFLILLLSGLLSFGVKESAWVNKIFTAINILVLLFVMISGFVKGDVDNWRISEEYLINLSEIAENFSSYKNVTSIYGSGGFMPYGFTGTLAGAATCFYAFVGFDCIATTGEEVRNPQKAIPIGIVVSLLVCFMAYFGVSAALTLMMPYYLLDEKSPLPVAFAYVGWGPAKYVVAVGSLCALSTSLLGSMFPLPRIVFAMARDGLLFSFLAKVSKRQAPLLATLTAGVISAIMAFLFDLKALVDIMSIGTLLAYSLVATCVLILRYQPSLTYEQPKYSPEKATLAASKRESAVSESQINMIQESHFSLQTLINPSSLPTEQTATTVNCFVGLLAFLVCGLSALTTYGTHFIANLEPWSICLLATLVVSFIVTILLIQRQPQNQQKVAFMVPLLPFLPSLSILVNIYLMVQLSADTWIRFSIWMALGFIIYFTYGIRHSLEGRHSDGDGDSCSENSGLQEKNPVEEVDEPENANESDKFLARERTSEC</sequence>
<comment type="function">
    <text evidence="1 2">Low-affinity, high capacity permease involved in the transport of the cationic amino acids (L-arginine, L-lysine, L-ornithine and L-homoarginine).</text>
</comment>
<comment type="catalytic activity">
    <reaction evidence="1">
        <text>L-arginine(in) = L-arginine(out)</text>
        <dbReference type="Rhea" id="RHEA:32143"/>
        <dbReference type="ChEBI" id="CHEBI:32682"/>
    </reaction>
</comment>
<comment type="catalytic activity">
    <reaction evidence="1">
        <text>L-lysine(in) = L-lysine(out)</text>
        <dbReference type="Rhea" id="RHEA:70935"/>
        <dbReference type="ChEBI" id="CHEBI:32551"/>
    </reaction>
</comment>
<comment type="catalytic activity">
    <reaction evidence="1">
        <text>L-ornithine(in) = L-ornithine(out)</text>
        <dbReference type="Rhea" id="RHEA:71199"/>
        <dbReference type="ChEBI" id="CHEBI:46911"/>
    </reaction>
</comment>
<comment type="catalytic activity">
    <reaction evidence="2">
        <text>L-homoarginine(in) = L-homoarginine(out)</text>
        <dbReference type="Rhea" id="RHEA:71203"/>
        <dbReference type="ChEBI" id="CHEBI:143006"/>
    </reaction>
</comment>
<comment type="subcellular location">
    <subcellularLocation>
        <location evidence="1">Cell membrane</location>
        <topology evidence="1">Multi-pass membrane protein</topology>
    </subcellularLocation>
</comment>
<comment type="alternative products">
    <event type="alternative splicing"/>
    <isoform>
        <id>B3TP03-1</id>
        <name>1</name>
        <name>cCAT-2A</name>
        <sequence type="displayed"/>
    </isoform>
    <isoform>
        <id>B3TP03-2</id>
        <name>2</name>
        <name>cCAT-2B</name>
        <sequence type="described" ref="VSP_037357"/>
    </isoform>
    <isoform>
        <id>B3TP03-3</id>
        <name>3</name>
        <name>cCAT-2C</name>
        <sequence type="described" ref="VSP_037356 VSP_037358"/>
    </isoform>
</comment>
<comment type="tissue specificity">
    <text evidence="5">Expressed in liver, pectoralis and gastrocnemius.</text>
</comment>
<comment type="miscellaneous">
    <molecule>Isoform 3</molecule>
    <text evidence="7">May be produced at very low levels due to a premature stop codon in the mRNA, leading to nonsense-mediated mRNA decay. Lacks the domain responsible for mediating amino acids transport.</text>
</comment>
<comment type="similarity">
    <text evidence="7">Belongs to the amino acid-polyamine-organocation (APC) superfamily. Cationic amino acid transporter (CAT) (TC 2.A.3.3) family.</text>
</comment>
<accession>B3TP03</accession>
<accession>B3TP04</accession>
<accession>B3TP05</accession>
<evidence type="ECO:0000250" key="1">
    <source>
        <dbReference type="UniProtKB" id="P18581"/>
    </source>
</evidence>
<evidence type="ECO:0000250" key="2">
    <source>
        <dbReference type="UniProtKB" id="P52569"/>
    </source>
</evidence>
<evidence type="ECO:0000255" key="3"/>
<evidence type="ECO:0000256" key="4">
    <source>
        <dbReference type="SAM" id="MobiDB-lite"/>
    </source>
</evidence>
<evidence type="ECO:0000269" key="5">
    <source>
    </source>
</evidence>
<evidence type="ECO:0000303" key="6">
    <source>
    </source>
</evidence>
<evidence type="ECO:0000305" key="7"/>
<organism>
    <name type="scientific">Gallus gallus</name>
    <name type="common">Chicken</name>
    <dbReference type="NCBI Taxonomy" id="9031"/>
    <lineage>
        <taxon>Eukaryota</taxon>
        <taxon>Metazoa</taxon>
        <taxon>Chordata</taxon>
        <taxon>Craniata</taxon>
        <taxon>Vertebrata</taxon>
        <taxon>Euteleostomi</taxon>
        <taxon>Archelosauria</taxon>
        <taxon>Archosauria</taxon>
        <taxon>Dinosauria</taxon>
        <taxon>Saurischia</taxon>
        <taxon>Theropoda</taxon>
        <taxon>Coelurosauria</taxon>
        <taxon>Aves</taxon>
        <taxon>Neognathae</taxon>
        <taxon>Galloanserae</taxon>
        <taxon>Galliformes</taxon>
        <taxon>Phasianidae</taxon>
        <taxon>Phasianinae</taxon>
        <taxon>Gallus</taxon>
    </lineage>
</organism>